<gene>
    <name evidence="1" type="primary">argB</name>
    <name type="ordered locus">PMM0499</name>
</gene>
<reference key="1">
    <citation type="journal article" date="2003" name="Nature">
        <title>Genome divergence in two Prochlorococcus ecotypes reflects oceanic niche differentiation.</title>
        <authorList>
            <person name="Rocap G."/>
            <person name="Larimer F.W."/>
            <person name="Lamerdin J.E."/>
            <person name="Malfatti S."/>
            <person name="Chain P."/>
            <person name="Ahlgren N.A."/>
            <person name="Arellano A."/>
            <person name="Coleman M."/>
            <person name="Hauser L."/>
            <person name="Hess W.R."/>
            <person name="Johnson Z.I."/>
            <person name="Land M.L."/>
            <person name="Lindell D."/>
            <person name="Post A.F."/>
            <person name="Regala W."/>
            <person name="Shah M."/>
            <person name="Shaw S.L."/>
            <person name="Steglich C."/>
            <person name="Sullivan M.B."/>
            <person name="Ting C.S."/>
            <person name="Tolonen A."/>
            <person name="Webb E.A."/>
            <person name="Zinser E.R."/>
            <person name="Chisholm S.W."/>
        </authorList>
    </citation>
    <scope>NUCLEOTIDE SEQUENCE [LARGE SCALE GENOMIC DNA]</scope>
    <source>
        <strain>CCMP1986 / NIES-2087 / MED4</strain>
    </source>
</reference>
<dbReference type="EC" id="2.7.2.8" evidence="1"/>
<dbReference type="EMBL" id="BX548174">
    <property type="protein sequence ID" value="CAE18958.1"/>
    <property type="molecule type" value="Genomic_DNA"/>
</dbReference>
<dbReference type="SMR" id="Q7TUD1"/>
<dbReference type="STRING" id="59919.PMM0499"/>
<dbReference type="KEGG" id="pmm:PMM0499"/>
<dbReference type="eggNOG" id="COG0548">
    <property type="taxonomic scope" value="Bacteria"/>
</dbReference>
<dbReference type="HOGENOM" id="CLU_053680_0_0_3"/>
<dbReference type="UniPathway" id="UPA00068">
    <property type="reaction ID" value="UER00107"/>
</dbReference>
<dbReference type="Proteomes" id="UP000001026">
    <property type="component" value="Chromosome"/>
</dbReference>
<dbReference type="GO" id="GO:0005737">
    <property type="term" value="C:cytoplasm"/>
    <property type="evidence" value="ECO:0007669"/>
    <property type="project" value="UniProtKB-SubCell"/>
</dbReference>
<dbReference type="GO" id="GO:0003991">
    <property type="term" value="F:acetylglutamate kinase activity"/>
    <property type="evidence" value="ECO:0007669"/>
    <property type="project" value="UniProtKB-UniRule"/>
</dbReference>
<dbReference type="GO" id="GO:0005524">
    <property type="term" value="F:ATP binding"/>
    <property type="evidence" value="ECO:0007669"/>
    <property type="project" value="UniProtKB-UniRule"/>
</dbReference>
<dbReference type="GO" id="GO:0042450">
    <property type="term" value="P:arginine biosynthetic process via ornithine"/>
    <property type="evidence" value="ECO:0007669"/>
    <property type="project" value="UniProtKB-UniRule"/>
</dbReference>
<dbReference type="GO" id="GO:0006526">
    <property type="term" value="P:L-arginine biosynthetic process"/>
    <property type="evidence" value="ECO:0007669"/>
    <property type="project" value="UniProtKB-UniPathway"/>
</dbReference>
<dbReference type="CDD" id="cd04250">
    <property type="entry name" value="AAK_NAGK-C"/>
    <property type="match status" value="1"/>
</dbReference>
<dbReference type="FunFam" id="3.40.1160.10:FF:000004">
    <property type="entry name" value="Acetylglutamate kinase"/>
    <property type="match status" value="1"/>
</dbReference>
<dbReference type="Gene3D" id="3.40.1160.10">
    <property type="entry name" value="Acetylglutamate kinase-like"/>
    <property type="match status" value="1"/>
</dbReference>
<dbReference type="HAMAP" id="MF_00082">
    <property type="entry name" value="ArgB"/>
    <property type="match status" value="1"/>
</dbReference>
<dbReference type="InterPro" id="IPR036393">
    <property type="entry name" value="AceGlu_kinase-like_sf"/>
</dbReference>
<dbReference type="InterPro" id="IPR004662">
    <property type="entry name" value="AcgluKinase_fam"/>
</dbReference>
<dbReference type="InterPro" id="IPR037528">
    <property type="entry name" value="ArgB"/>
</dbReference>
<dbReference type="InterPro" id="IPR001048">
    <property type="entry name" value="Asp/Glu/Uridylate_kinase"/>
</dbReference>
<dbReference type="InterPro" id="IPR041727">
    <property type="entry name" value="NAGK-C"/>
</dbReference>
<dbReference type="NCBIfam" id="TIGR00761">
    <property type="entry name" value="argB"/>
    <property type="match status" value="1"/>
</dbReference>
<dbReference type="PANTHER" id="PTHR23342">
    <property type="entry name" value="N-ACETYLGLUTAMATE SYNTHASE"/>
    <property type="match status" value="1"/>
</dbReference>
<dbReference type="PANTHER" id="PTHR23342:SF0">
    <property type="entry name" value="N-ACETYLGLUTAMATE SYNTHASE, MITOCHONDRIAL"/>
    <property type="match status" value="1"/>
</dbReference>
<dbReference type="Pfam" id="PF00696">
    <property type="entry name" value="AA_kinase"/>
    <property type="match status" value="1"/>
</dbReference>
<dbReference type="PIRSF" id="PIRSF000728">
    <property type="entry name" value="NAGK"/>
    <property type="match status" value="1"/>
</dbReference>
<dbReference type="SUPFAM" id="SSF53633">
    <property type="entry name" value="Carbamate kinase-like"/>
    <property type="match status" value="1"/>
</dbReference>
<sequence length="284" mass="30608">MMDDSLRVSILSEALPYIQRFSGRKIVVKYGGSIMEDEKLKEAFFRDIALLSSVGVCPVVIHGGGPEINRWLNKLEISPKFENGLRVTDEKTMEIVEMVLMGRVNKQIVRGINKTGSLAVGISGLDGNLIQSRELGDGSHGLVGEVTQINPELLDPLIAKGYIPVISSIGSTADGISHNINADFVAGEVAAAINAEKLILLTDTPGILKEGDNPNSLVKQINLKDARKFIEKNIVSNGMLPKTECCIRALAQGVKAAHIIDGRIEHSLLLEIFTNSGIGTMINA</sequence>
<comment type="function">
    <text evidence="1">Catalyzes the ATP-dependent phosphorylation of N-acetyl-L-glutamate.</text>
</comment>
<comment type="catalytic activity">
    <reaction evidence="1">
        <text>N-acetyl-L-glutamate + ATP = N-acetyl-L-glutamyl 5-phosphate + ADP</text>
        <dbReference type="Rhea" id="RHEA:14629"/>
        <dbReference type="ChEBI" id="CHEBI:30616"/>
        <dbReference type="ChEBI" id="CHEBI:44337"/>
        <dbReference type="ChEBI" id="CHEBI:57936"/>
        <dbReference type="ChEBI" id="CHEBI:456216"/>
        <dbReference type="EC" id="2.7.2.8"/>
    </reaction>
</comment>
<comment type="pathway">
    <text evidence="1">Amino-acid biosynthesis; L-arginine biosynthesis; N(2)-acetyl-L-ornithine from L-glutamate: step 2/4.</text>
</comment>
<comment type="subcellular location">
    <subcellularLocation>
        <location evidence="1">Cytoplasm</location>
    </subcellularLocation>
</comment>
<comment type="similarity">
    <text evidence="1">Belongs to the acetylglutamate kinase family. ArgB subfamily.</text>
</comment>
<accession>Q7TUD1</accession>
<proteinExistence type="inferred from homology"/>
<name>ARGB_PROMP</name>
<protein>
    <recommendedName>
        <fullName evidence="1">Acetylglutamate kinase</fullName>
        <ecNumber evidence="1">2.7.2.8</ecNumber>
    </recommendedName>
    <alternativeName>
        <fullName evidence="1">N-acetyl-L-glutamate 5-phosphotransferase</fullName>
    </alternativeName>
    <alternativeName>
        <fullName evidence="1">NAG kinase</fullName>
        <shortName evidence="1">NAGK</shortName>
    </alternativeName>
</protein>
<evidence type="ECO:0000255" key="1">
    <source>
        <dbReference type="HAMAP-Rule" id="MF_00082"/>
    </source>
</evidence>
<feature type="chain" id="PRO_0000112649" description="Acetylglutamate kinase">
    <location>
        <begin position="1"/>
        <end position="284"/>
    </location>
</feature>
<feature type="binding site" evidence="1">
    <location>
        <begin position="64"/>
        <end position="65"/>
    </location>
    <ligand>
        <name>substrate</name>
    </ligand>
</feature>
<feature type="binding site" evidence="1">
    <location>
        <position position="86"/>
    </location>
    <ligand>
        <name>substrate</name>
    </ligand>
</feature>
<feature type="binding site" evidence="1">
    <location>
        <position position="179"/>
    </location>
    <ligand>
        <name>substrate</name>
    </ligand>
</feature>
<feature type="site" description="Transition state stabilizer" evidence="1">
    <location>
        <position position="29"/>
    </location>
</feature>
<feature type="site" description="Transition state stabilizer" evidence="1">
    <location>
        <position position="242"/>
    </location>
</feature>
<keyword id="KW-0028">Amino-acid biosynthesis</keyword>
<keyword id="KW-0055">Arginine biosynthesis</keyword>
<keyword id="KW-0067">ATP-binding</keyword>
<keyword id="KW-0963">Cytoplasm</keyword>
<keyword id="KW-0418">Kinase</keyword>
<keyword id="KW-0547">Nucleotide-binding</keyword>
<keyword id="KW-0808">Transferase</keyword>
<organism>
    <name type="scientific">Prochlorococcus marinus subsp. pastoris (strain CCMP1986 / NIES-2087 / MED4)</name>
    <dbReference type="NCBI Taxonomy" id="59919"/>
    <lineage>
        <taxon>Bacteria</taxon>
        <taxon>Bacillati</taxon>
        <taxon>Cyanobacteriota</taxon>
        <taxon>Cyanophyceae</taxon>
        <taxon>Synechococcales</taxon>
        <taxon>Prochlorococcaceae</taxon>
        <taxon>Prochlorococcus</taxon>
    </lineage>
</organism>